<evidence type="ECO:0000255" key="1">
    <source>
        <dbReference type="HAMAP-Rule" id="MF_00362"/>
    </source>
</evidence>
<evidence type="ECO:0000305" key="2"/>
<sequence>MTRNEKSEVIAKLESEFKDAQAIVVCDYHGLSVKKLEALRNAAREQNVKVQVIKNTLANIALKNSAKDGMSLKDTNIYLWSEDQLAVTKVVVKFEEANSEFFKIKTAYIDGEVASVDKVKALSKMPSRDELIAMLLQVWNAPIQNFTIGLNALKEKKEQSA</sequence>
<organism>
    <name type="scientific">Campylobacter curvus (strain 525.92)</name>
    <dbReference type="NCBI Taxonomy" id="360105"/>
    <lineage>
        <taxon>Bacteria</taxon>
        <taxon>Pseudomonadati</taxon>
        <taxon>Campylobacterota</taxon>
        <taxon>Epsilonproteobacteria</taxon>
        <taxon>Campylobacterales</taxon>
        <taxon>Campylobacteraceae</taxon>
        <taxon>Campylobacter</taxon>
    </lineage>
</organism>
<accession>A7GZK1</accession>
<gene>
    <name evidence="1" type="primary">rplJ</name>
    <name type="ordered locus">Ccur92_13390</name>
    <name type="ORF">CCV52592_0179</name>
</gene>
<protein>
    <recommendedName>
        <fullName evidence="1">Large ribosomal subunit protein uL10</fullName>
    </recommendedName>
    <alternativeName>
        <fullName evidence="2">50S ribosomal protein L10</fullName>
    </alternativeName>
</protein>
<keyword id="KW-1185">Reference proteome</keyword>
<keyword id="KW-0687">Ribonucleoprotein</keyword>
<keyword id="KW-0689">Ribosomal protein</keyword>
<keyword id="KW-0694">RNA-binding</keyword>
<keyword id="KW-0699">rRNA-binding</keyword>
<feature type="chain" id="PRO_1000005480" description="Large ribosomal subunit protein uL10">
    <location>
        <begin position="1"/>
        <end position="161"/>
    </location>
</feature>
<proteinExistence type="inferred from homology"/>
<dbReference type="EMBL" id="CP000767">
    <property type="protein sequence ID" value="EAU01228.1"/>
    <property type="molecule type" value="Genomic_DNA"/>
</dbReference>
<dbReference type="RefSeq" id="WP_011992522.1">
    <property type="nucleotide sequence ID" value="NC_009715.2"/>
</dbReference>
<dbReference type="SMR" id="A7GZK1"/>
<dbReference type="STRING" id="360105.CCV52592_0179"/>
<dbReference type="KEGG" id="ccv:CCV52592_0179"/>
<dbReference type="HOGENOM" id="CLU_092227_2_2_7"/>
<dbReference type="OrthoDB" id="3186107at2"/>
<dbReference type="Proteomes" id="UP000006380">
    <property type="component" value="Chromosome"/>
</dbReference>
<dbReference type="GO" id="GO:0015934">
    <property type="term" value="C:large ribosomal subunit"/>
    <property type="evidence" value="ECO:0007669"/>
    <property type="project" value="InterPro"/>
</dbReference>
<dbReference type="GO" id="GO:0070180">
    <property type="term" value="F:large ribosomal subunit rRNA binding"/>
    <property type="evidence" value="ECO:0007669"/>
    <property type="project" value="UniProtKB-UniRule"/>
</dbReference>
<dbReference type="GO" id="GO:0003735">
    <property type="term" value="F:structural constituent of ribosome"/>
    <property type="evidence" value="ECO:0007669"/>
    <property type="project" value="InterPro"/>
</dbReference>
<dbReference type="GO" id="GO:0006412">
    <property type="term" value="P:translation"/>
    <property type="evidence" value="ECO:0007669"/>
    <property type="project" value="UniProtKB-UniRule"/>
</dbReference>
<dbReference type="CDD" id="cd05797">
    <property type="entry name" value="Ribosomal_L10"/>
    <property type="match status" value="1"/>
</dbReference>
<dbReference type="Gene3D" id="3.30.70.1730">
    <property type="match status" value="1"/>
</dbReference>
<dbReference type="Gene3D" id="6.10.250.290">
    <property type="match status" value="1"/>
</dbReference>
<dbReference type="HAMAP" id="MF_00362">
    <property type="entry name" value="Ribosomal_uL10"/>
    <property type="match status" value="1"/>
</dbReference>
<dbReference type="InterPro" id="IPR001790">
    <property type="entry name" value="Ribosomal_uL10"/>
</dbReference>
<dbReference type="InterPro" id="IPR043141">
    <property type="entry name" value="Ribosomal_uL10-like_sf"/>
</dbReference>
<dbReference type="InterPro" id="IPR022973">
    <property type="entry name" value="Ribosomal_uL10_bac"/>
</dbReference>
<dbReference type="InterPro" id="IPR047865">
    <property type="entry name" value="Ribosomal_uL10_bac_type"/>
</dbReference>
<dbReference type="InterPro" id="IPR002363">
    <property type="entry name" value="Ribosomal_uL10_CS_bac"/>
</dbReference>
<dbReference type="NCBIfam" id="NF000955">
    <property type="entry name" value="PRK00099.1-1"/>
    <property type="match status" value="1"/>
</dbReference>
<dbReference type="PANTHER" id="PTHR11560">
    <property type="entry name" value="39S RIBOSOMAL PROTEIN L10, MITOCHONDRIAL"/>
    <property type="match status" value="1"/>
</dbReference>
<dbReference type="Pfam" id="PF00466">
    <property type="entry name" value="Ribosomal_L10"/>
    <property type="match status" value="1"/>
</dbReference>
<dbReference type="SUPFAM" id="SSF160369">
    <property type="entry name" value="Ribosomal protein L10-like"/>
    <property type="match status" value="1"/>
</dbReference>
<dbReference type="PROSITE" id="PS01109">
    <property type="entry name" value="RIBOSOMAL_L10"/>
    <property type="match status" value="1"/>
</dbReference>
<reference key="1">
    <citation type="submission" date="2007-07" db="EMBL/GenBank/DDBJ databases">
        <title>Genome sequence of Campylobacter curvus 525.92 isolated from human feces.</title>
        <authorList>
            <person name="Fouts D.E."/>
            <person name="Mongodin E.F."/>
            <person name="Puiu D."/>
            <person name="Sebastian Y."/>
            <person name="Miller W.G."/>
            <person name="Mandrell R.E."/>
            <person name="Lastovica A.J."/>
            <person name="Nelson K.E."/>
        </authorList>
    </citation>
    <scope>NUCLEOTIDE SEQUENCE [LARGE SCALE GENOMIC DNA]</scope>
    <source>
        <strain>525.92</strain>
    </source>
</reference>
<comment type="function">
    <text evidence="1">Forms part of the ribosomal stalk, playing a central role in the interaction of the ribosome with GTP-bound translation factors.</text>
</comment>
<comment type="subunit">
    <text evidence="1">Part of the ribosomal stalk of the 50S ribosomal subunit. The N-terminus interacts with L11 and the large rRNA to form the base of the stalk. The C-terminus forms an elongated spine to which L12 dimers bind in a sequential fashion forming a multimeric L10(L12)X complex.</text>
</comment>
<comment type="similarity">
    <text evidence="1">Belongs to the universal ribosomal protein uL10 family.</text>
</comment>
<name>RL10_CAMC5</name>